<organism>
    <name type="scientific">Yersinia enterocolitica</name>
    <dbReference type="NCBI Taxonomy" id="630"/>
    <lineage>
        <taxon>Bacteria</taxon>
        <taxon>Pseudomonadati</taxon>
        <taxon>Pseudomonadota</taxon>
        <taxon>Gammaproteobacteria</taxon>
        <taxon>Enterobacterales</taxon>
        <taxon>Yersiniaceae</taxon>
        <taxon>Yersinia</taxon>
    </lineage>
</organism>
<dbReference type="EMBL" id="Z29675">
    <property type="protein sequence ID" value="CAA82773.1"/>
    <property type="molecule type" value="Genomic_DNA"/>
</dbReference>
<dbReference type="EMBL" id="Z35485">
    <property type="protein sequence ID" value="CAA84620.1"/>
    <property type="molecule type" value="Genomic_DNA"/>
</dbReference>
<dbReference type="EMBL" id="Z35487">
    <property type="protein sequence ID" value="CAA84622.1"/>
    <property type="molecule type" value="Genomic_DNA"/>
</dbReference>
<dbReference type="EMBL" id="Z35496">
    <property type="protein sequence ID" value="CAA84630.1"/>
    <property type="molecule type" value="Genomic_DNA"/>
</dbReference>
<dbReference type="PIR" id="S60142">
    <property type="entry name" value="S60142"/>
</dbReference>
<dbReference type="RefSeq" id="WP_005168662.1">
    <property type="nucleotide sequence ID" value="NZ_CQCV01000030.1"/>
</dbReference>
<dbReference type="RefSeq" id="WP_011816644.1">
    <property type="nucleotide sequence ID" value="NZ_NWMR01000021.1"/>
</dbReference>
<dbReference type="SMR" id="P0C2M9"/>
<dbReference type="TCDB" id="1.B.14.8.7">
    <property type="family name" value="the outer membrane receptor (omr) family"/>
</dbReference>
<dbReference type="KEGG" id="yew:CH47_1968"/>
<dbReference type="GO" id="GO:0009279">
    <property type="term" value="C:cell outer membrane"/>
    <property type="evidence" value="ECO:0007669"/>
    <property type="project" value="UniProtKB-SubCell"/>
</dbReference>
<dbReference type="GO" id="GO:0015343">
    <property type="term" value="F:siderophore-iron transmembrane transporter activity"/>
    <property type="evidence" value="ECO:0007669"/>
    <property type="project" value="InterPro"/>
</dbReference>
<dbReference type="GO" id="GO:0038023">
    <property type="term" value="F:signaling receptor activity"/>
    <property type="evidence" value="ECO:0007669"/>
    <property type="project" value="InterPro"/>
</dbReference>
<dbReference type="CDD" id="cd01347">
    <property type="entry name" value="ligand_gated_channel"/>
    <property type="match status" value="1"/>
</dbReference>
<dbReference type="Gene3D" id="2.40.170.20">
    <property type="entry name" value="TonB-dependent receptor, beta-barrel domain"/>
    <property type="match status" value="1"/>
</dbReference>
<dbReference type="InterPro" id="IPR012910">
    <property type="entry name" value="Plug_dom"/>
</dbReference>
<dbReference type="InterPro" id="IPR039426">
    <property type="entry name" value="TonB-dep_rcpt-like"/>
</dbReference>
<dbReference type="InterPro" id="IPR000531">
    <property type="entry name" value="TonB-dep_rcpt_b-brl"/>
</dbReference>
<dbReference type="InterPro" id="IPR036942">
    <property type="entry name" value="TonB_rcpt_b-brl_sf"/>
</dbReference>
<dbReference type="InterPro" id="IPR010105">
    <property type="entry name" value="TonB_sidphr_rcpt"/>
</dbReference>
<dbReference type="NCBIfam" id="TIGR01783">
    <property type="entry name" value="TonB-siderophor"/>
    <property type="match status" value="1"/>
</dbReference>
<dbReference type="PANTHER" id="PTHR32552">
    <property type="entry name" value="FERRICHROME IRON RECEPTOR-RELATED"/>
    <property type="match status" value="1"/>
</dbReference>
<dbReference type="PANTHER" id="PTHR32552:SF81">
    <property type="entry name" value="TONB-DEPENDENT OUTER MEMBRANE RECEPTOR"/>
    <property type="match status" value="1"/>
</dbReference>
<dbReference type="Pfam" id="PF07715">
    <property type="entry name" value="Plug"/>
    <property type="match status" value="1"/>
</dbReference>
<dbReference type="Pfam" id="PF00593">
    <property type="entry name" value="TonB_dep_Rec_b-barrel"/>
    <property type="match status" value="1"/>
</dbReference>
<dbReference type="SUPFAM" id="SSF56935">
    <property type="entry name" value="Porins"/>
    <property type="match status" value="1"/>
</dbReference>
<dbReference type="PROSITE" id="PS52016">
    <property type="entry name" value="TONB_DEPENDENT_REC_3"/>
    <property type="match status" value="1"/>
</dbReference>
<accession>P0C2M9</accession>
<accession>P46360</accession>
<reference key="1">
    <citation type="journal article" date="1994" name="Mol. Microbiol.">
        <title>The pesticin receptor of Yersinia enterocolitica: a novel virulence factor with dual function.</title>
        <authorList>
            <person name="Rakin A."/>
            <person name="Saken E."/>
            <person name="Harmsen D."/>
            <person name="Heesemann J."/>
        </authorList>
    </citation>
    <scope>NUCLEOTIDE SEQUENCE [GENOMIC DNA]</scope>
    <source>
        <strain>ATCC 51871 / WA-314 / Serotype O:8</strain>
    </source>
</reference>
<reference key="2">
    <citation type="journal article" date="1995" name="J. Bacteriol.">
        <title>Evidence for two evolutionary lineages of highly pathogenic Yersinia species.</title>
        <authorList>
            <person name="Rakin A."/>
            <person name="Urbitsch P."/>
            <person name="Heesemann J."/>
        </authorList>
    </citation>
    <scope>NUCLEOTIDE SEQUENCE [GENOMIC DNA]</scope>
    <source>
        <strain>1209-79 / Serotype O:13</strain>
        <strain>1223-75-1 / Serotype O:20</strain>
        <strain>YE737 / Serotype O:21</strain>
    </source>
</reference>
<reference key="3">
    <citation type="journal article" date="2001" name="Infect. Immun.">
        <title>Expression analysis of the yersiniabactin receptor gene fyuA and the heme receptor hemR of Yersinia enterocolitica in vitro and in vivo using the reporter genes for green fluorescent protein and luciferase.</title>
        <authorList>
            <person name="Jacobi C.A."/>
            <person name="Gregor S."/>
            <person name="Rakin A."/>
            <person name="Heesemann J."/>
        </authorList>
    </citation>
    <scope>EXPRESSION</scope>
    <source>
        <strain>ATCC 51872 / WA-C / Serotype O:8</strain>
    </source>
</reference>
<gene>
    <name type="primary">fyuA</name>
</gene>
<proteinExistence type="evidence at transcript level"/>
<keyword id="KW-0998">Cell outer membrane</keyword>
<keyword id="KW-0406">Ion transport</keyword>
<keyword id="KW-0408">Iron</keyword>
<keyword id="KW-0410">Iron transport</keyword>
<keyword id="KW-0472">Membrane</keyword>
<keyword id="KW-0675">Receptor</keyword>
<keyword id="KW-0732">Signal</keyword>
<keyword id="KW-0798">TonB box</keyword>
<keyword id="KW-0812">Transmembrane</keyword>
<keyword id="KW-1134">Transmembrane beta strand</keyword>
<keyword id="KW-0813">Transport</keyword>
<evidence type="ECO:0000255" key="1"/>
<evidence type="ECO:0000255" key="2">
    <source>
        <dbReference type="PROSITE-ProRule" id="PRU01360"/>
    </source>
</evidence>
<evidence type="ECO:0000305" key="3"/>
<name>FYUA_YEREN</name>
<protein>
    <recommendedName>
        <fullName>Pesticin receptor</fullName>
    </recommendedName>
    <alternativeName>
        <fullName>IPR65</fullName>
    </alternativeName>
    <alternativeName>
        <fullName>IRPC</fullName>
    </alternativeName>
</protein>
<sequence>MKMTRLYPLALGGLLLPAIANAQTSQQDESTLEVTASKQSSRSASANNVSSTVVSAPELSDAGVTASDKLPRVLPGLNIENSGNMLFSTISLRGVSSAQDFYNPAVTLYVDGVPQLSTNTIQALTDVQSVELLRGPQGTLYGKSAQGGIINIVTQQPDSTPRGYIEGGVSSRDSYRSKFNLSGPIQDGLLYGSVTLLRQVDDGDMINPATGSDDLGGTRASIGNVKLRLAPDDQPWEMGFAASRECTRATQDAYVGWNDIKGRKLSLSDGSPDPYMRRCTDSQTLSGKYTTDDWVFNLISAWQQQHYSRTFPSGSLIVNMPQRWNQDVQELRAATLGDARTVDMVFGLYRQNTREKLNSAYNMPTMPYLSSTGYTTAETLAAYSDLTWHLTDRFDIGGGVRFSHDKSSTQYHGSMLGNPFGDQGKSNDDQVLGQLSAGYMLTDDWRVYTRIAQGYKPSGYNIVPTAGLDAKPFVAEKSINYELGTRYETADVTLQAATFYTHTKDMQLYSGPVGMQTLSNAGKADATGVELEAKWRFAPGWSWDINGNVIRSEFTNDSELYHGNRVPFVPRYGAGSSVNGVIDTRYGALMPRLAVNLVGPHYFDGDNQLRQGTYATLDSSLGWQATERINISVHVDNLFDRRYRTYGYMNGSSAVAQVNMGRTVGINTRIDFF</sequence>
<feature type="signal peptide" evidence="1">
    <location>
        <begin position="1"/>
        <end position="22"/>
    </location>
</feature>
<feature type="chain" id="PRO_0000034756" description="Pesticin receptor">
    <location>
        <begin position="23"/>
        <end position="673"/>
    </location>
</feature>
<feature type="domain" description="TBDR plug" evidence="2">
    <location>
        <begin position="41"/>
        <end position="155"/>
    </location>
</feature>
<feature type="domain" description="TBDR beta-barrel" evidence="2">
    <location>
        <begin position="160"/>
        <end position="672"/>
    </location>
</feature>
<feature type="short sequence motif" description="TonB box">
    <location>
        <begin position="30"/>
        <end position="37"/>
    </location>
</feature>
<feature type="short sequence motif" description="TonB C-terminal box">
    <location>
        <begin position="657"/>
        <end position="673"/>
    </location>
</feature>
<feature type="sequence variant" description="In strain: YE737 and 1209-79.">
    <original>N</original>
    <variation>D</variation>
    <location>
        <position position="362"/>
    </location>
</feature>
<comment type="function">
    <text>Receptor for the bacteriocin pesticin and for the siderophore yersiniabactin.</text>
</comment>
<comment type="subcellular location">
    <subcellularLocation>
        <location evidence="2">Cell outer membrane</location>
        <topology evidence="2">Multi-pass membrane protein</topology>
    </subcellularLocation>
</comment>
<comment type="induction">
    <text>Induced in absence of iron.</text>
</comment>
<comment type="miscellaneous">
    <text>Weakly expressed by yersiniae located in the liver and the intestinal lumen. Strongly expressed in yersiniae located in the peritoneal cavity. Moderately expressed in yersiniae located in the spleen. This probably reflects the availability of iron for yersiniae.</text>
</comment>
<comment type="similarity">
    <text evidence="3">Belongs to the TonB-dependent receptor family.</text>
</comment>